<keyword id="KW-0408">Iron</keyword>
<accession>Q4UW14</accession>
<name>FETP_XANC8</name>
<reference key="1">
    <citation type="journal article" date="2005" name="Genome Res.">
        <title>Comparative and functional genomic analyses of the pathogenicity of phytopathogen Xanthomonas campestris pv. campestris.</title>
        <authorList>
            <person name="Qian W."/>
            <person name="Jia Y."/>
            <person name="Ren S.-X."/>
            <person name="He Y.-Q."/>
            <person name="Feng J.-X."/>
            <person name="Lu L.-F."/>
            <person name="Sun Q."/>
            <person name="Ying G."/>
            <person name="Tang D.-J."/>
            <person name="Tang H."/>
            <person name="Wu W."/>
            <person name="Hao P."/>
            <person name="Wang L."/>
            <person name="Jiang B.-L."/>
            <person name="Zeng S."/>
            <person name="Gu W.-Y."/>
            <person name="Lu G."/>
            <person name="Rong L."/>
            <person name="Tian Y."/>
            <person name="Yao Z."/>
            <person name="Fu G."/>
            <person name="Chen B."/>
            <person name="Fang R."/>
            <person name="Qiang B."/>
            <person name="Chen Z."/>
            <person name="Zhao G.-P."/>
            <person name="Tang J.-L."/>
            <person name="He C."/>
        </authorList>
    </citation>
    <scope>NUCLEOTIDE SEQUENCE [LARGE SCALE GENOMIC DNA]</scope>
    <source>
        <strain>8004</strain>
    </source>
</reference>
<gene>
    <name type="ordered locus">XC_1693</name>
</gene>
<dbReference type="EMBL" id="CP000050">
    <property type="protein sequence ID" value="AAY48759.1"/>
    <property type="molecule type" value="Genomic_DNA"/>
</dbReference>
<dbReference type="RefSeq" id="WP_011037561.1">
    <property type="nucleotide sequence ID" value="NZ_CP155948.1"/>
</dbReference>
<dbReference type="SMR" id="Q4UW14"/>
<dbReference type="KEGG" id="xcb:XC_1693"/>
<dbReference type="HOGENOM" id="CLU_170994_0_0_6"/>
<dbReference type="Proteomes" id="UP000000420">
    <property type="component" value="Chromosome"/>
</dbReference>
<dbReference type="GO" id="GO:0005829">
    <property type="term" value="C:cytosol"/>
    <property type="evidence" value="ECO:0007669"/>
    <property type="project" value="TreeGrafter"/>
</dbReference>
<dbReference type="GO" id="GO:0005506">
    <property type="term" value="F:iron ion binding"/>
    <property type="evidence" value="ECO:0007669"/>
    <property type="project" value="UniProtKB-UniRule"/>
</dbReference>
<dbReference type="GO" id="GO:0034599">
    <property type="term" value="P:cellular response to oxidative stress"/>
    <property type="evidence" value="ECO:0007669"/>
    <property type="project" value="TreeGrafter"/>
</dbReference>
<dbReference type="FunFam" id="1.10.3880.10:FF:000001">
    <property type="entry name" value="Probable Fe(2+)-trafficking protein"/>
    <property type="match status" value="1"/>
</dbReference>
<dbReference type="Gene3D" id="1.10.3880.10">
    <property type="entry name" value="Fe(II) trafficking protein YggX"/>
    <property type="match status" value="1"/>
</dbReference>
<dbReference type="HAMAP" id="MF_00686">
    <property type="entry name" value="Fe_traffic_YggX"/>
    <property type="match status" value="1"/>
</dbReference>
<dbReference type="InterPro" id="IPR007457">
    <property type="entry name" value="Fe_traffick_prot_YggX"/>
</dbReference>
<dbReference type="InterPro" id="IPR036766">
    <property type="entry name" value="Fe_traffick_prot_YggX_sf"/>
</dbReference>
<dbReference type="NCBIfam" id="NF003817">
    <property type="entry name" value="PRK05408.1"/>
    <property type="match status" value="1"/>
</dbReference>
<dbReference type="PANTHER" id="PTHR36965">
    <property type="entry name" value="FE(2+)-TRAFFICKING PROTEIN-RELATED"/>
    <property type="match status" value="1"/>
</dbReference>
<dbReference type="PANTHER" id="PTHR36965:SF1">
    <property type="entry name" value="FE(2+)-TRAFFICKING PROTEIN-RELATED"/>
    <property type="match status" value="1"/>
</dbReference>
<dbReference type="Pfam" id="PF04362">
    <property type="entry name" value="Iron_traffic"/>
    <property type="match status" value="1"/>
</dbReference>
<dbReference type="PIRSF" id="PIRSF029827">
    <property type="entry name" value="Fe_traffic_YggX"/>
    <property type="match status" value="1"/>
</dbReference>
<dbReference type="SUPFAM" id="SSF111148">
    <property type="entry name" value="YggX-like"/>
    <property type="match status" value="1"/>
</dbReference>
<feature type="chain" id="PRO_0000246122" description="Probable Fe(2+)-trafficking protein">
    <location>
        <begin position="1"/>
        <end position="92"/>
    </location>
</feature>
<comment type="function">
    <text evidence="1">Could be a mediator in iron transactions between iron acquisition and iron-requiring processes, such as synthesis and/or repair of Fe-S clusters in biosynthetic enzymes.</text>
</comment>
<comment type="similarity">
    <text evidence="1">Belongs to the Fe(2+)-trafficking protein family.</text>
</comment>
<proteinExistence type="inferred from homology"/>
<organism>
    <name type="scientific">Xanthomonas campestris pv. campestris (strain 8004)</name>
    <dbReference type="NCBI Taxonomy" id="314565"/>
    <lineage>
        <taxon>Bacteria</taxon>
        <taxon>Pseudomonadati</taxon>
        <taxon>Pseudomonadota</taxon>
        <taxon>Gammaproteobacteria</taxon>
        <taxon>Lysobacterales</taxon>
        <taxon>Lysobacteraceae</taxon>
        <taxon>Xanthomonas</taxon>
    </lineage>
</organism>
<evidence type="ECO:0000255" key="1">
    <source>
        <dbReference type="HAMAP-Rule" id="MF_00686"/>
    </source>
</evidence>
<protein>
    <recommendedName>
        <fullName evidence="1">Probable Fe(2+)-trafficking protein</fullName>
    </recommendedName>
</protein>
<sequence length="92" mass="10645">MSRTVFCQYQQCDTEGLDFAPYPGELGQRIFAQIGKAGWQAWLAHQTMLINENRLSPRDPKHRAFLEAELQKFLFERNADKPEGYVDPLGEE</sequence>